<comment type="function">
    <text evidence="1">Produces ATP from ADP in the presence of a proton gradient across the membrane.</text>
</comment>
<comment type="subunit">
    <text evidence="1">F-type ATPases have 2 components, CF(1) - the catalytic core - and CF(0) - the membrane proton channel. CF(1) has five subunits: alpha(3), beta(3), gamma(1), delta(1), epsilon(1). CF(0) has three main subunits: a, b and c.</text>
</comment>
<comment type="subcellular location">
    <subcellularLocation>
        <location evidence="1">Cell inner membrane</location>
        <topology evidence="1">Peripheral membrane protein</topology>
    </subcellularLocation>
</comment>
<comment type="similarity">
    <text evidence="1">Belongs to the ATPase epsilon chain family.</text>
</comment>
<dbReference type="EMBL" id="CP001138">
    <property type="protein sequence ID" value="ACH50717.1"/>
    <property type="molecule type" value="Genomic_DNA"/>
</dbReference>
<dbReference type="RefSeq" id="WP_001251971.1">
    <property type="nucleotide sequence ID" value="NC_011149.1"/>
</dbReference>
<dbReference type="SMR" id="B5EYZ5"/>
<dbReference type="KEGG" id="sea:SeAg_B4089"/>
<dbReference type="HOGENOM" id="CLU_084338_2_0_6"/>
<dbReference type="Proteomes" id="UP000008819">
    <property type="component" value="Chromosome"/>
</dbReference>
<dbReference type="GO" id="GO:0005886">
    <property type="term" value="C:plasma membrane"/>
    <property type="evidence" value="ECO:0007669"/>
    <property type="project" value="UniProtKB-SubCell"/>
</dbReference>
<dbReference type="GO" id="GO:0045259">
    <property type="term" value="C:proton-transporting ATP synthase complex"/>
    <property type="evidence" value="ECO:0007669"/>
    <property type="project" value="UniProtKB-KW"/>
</dbReference>
<dbReference type="GO" id="GO:0005524">
    <property type="term" value="F:ATP binding"/>
    <property type="evidence" value="ECO:0007669"/>
    <property type="project" value="UniProtKB-UniRule"/>
</dbReference>
<dbReference type="GO" id="GO:0046933">
    <property type="term" value="F:proton-transporting ATP synthase activity, rotational mechanism"/>
    <property type="evidence" value="ECO:0007669"/>
    <property type="project" value="UniProtKB-UniRule"/>
</dbReference>
<dbReference type="CDD" id="cd12152">
    <property type="entry name" value="F1-ATPase_delta"/>
    <property type="match status" value="1"/>
</dbReference>
<dbReference type="FunFam" id="1.20.5.440:FF:000001">
    <property type="entry name" value="ATP synthase epsilon chain"/>
    <property type="match status" value="1"/>
</dbReference>
<dbReference type="FunFam" id="2.60.15.10:FF:000001">
    <property type="entry name" value="ATP synthase epsilon chain"/>
    <property type="match status" value="1"/>
</dbReference>
<dbReference type="Gene3D" id="1.20.5.440">
    <property type="entry name" value="ATP synthase delta/epsilon subunit, C-terminal domain"/>
    <property type="match status" value="1"/>
</dbReference>
<dbReference type="Gene3D" id="2.60.15.10">
    <property type="entry name" value="F0F1 ATP synthase delta/epsilon subunit, N-terminal"/>
    <property type="match status" value="1"/>
</dbReference>
<dbReference type="HAMAP" id="MF_00530">
    <property type="entry name" value="ATP_synth_epsil_bac"/>
    <property type="match status" value="1"/>
</dbReference>
<dbReference type="InterPro" id="IPR036794">
    <property type="entry name" value="ATP_F1_dsu/esu_C_sf"/>
</dbReference>
<dbReference type="InterPro" id="IPR001469">
    <property type="entry name" value="ATP_synth_F1_dsu/esu"/>
</dbReference>
<dbReference type="InterPro" id="IPR020546">
    <property type="entry name" value="ATP_synth_F1_dsu/esu_N"/>
</dbReference>
<dbReference type="InterPro" id="IPR020547">
    <property type="entry name" value="ATP_synth_F1_esu_C"/>
</dbReference>
<dbReference type="InterPro" id="IPR036771">
    <property type="entry name" value="ATPsynth_dsu/esu_N"/>
</dbReference>
<dbReference type="NCBIfam" id="TIGR01216">
    <property type="entry name" value="ATP_synt_epsi"/>
    <property type="match status" value="1"/>
</dbReference>
<dbReference type="NCBIfam" id="NF001847">
    <property type="entry name" value="PRK00571.1-4"/>
    <property type="match status" value="1"/>
</dbReference>
<dbReference type="PANTHER" id="PTHR13822">
    <property type="entry name" value="ATP SYNTHASE DELTA/EPSILON CHAIN"/>
    <property type="match status" value="1"/>
</dbReference>
<dbReference type="PANTHER" id="PTHR13822:SF10">
    <property type="entry name" value="ATP SYNTHASE EPSILON CHAIN, CHLOROPLASTIC"/>
    <property type="match status" value="1"/>
</dbReference>
<dbReference type="Pfam" id="PF00401">
    <property type="entry name" value="ATP-synt_DE"/>
    <property type="match status" value="1"/>
</dbReference>
<dbReference type="Pfam" id="PF02823">
    <property type="entry name" value="ATP-synt_DE_N"/>
    <property type="match status" value="1"/>
</dbReference>
<dbReference type="SUPFAM" id="SSF46604">
    <property type="entry name" value="Epsilon subunit of F1F0-ATP synthase C-terminal domain"/>
    <property type="match status" value="1"/>
</dbReference>
<dbReference type="SUPFAM" id="SSF51344">
    <property type="entry name" value="Epsilon subunit of F1F0-ATP synthase N-terminal domain"/>
    <property type="match status" value="1"/>
</dbReference>
<protein>
    <recommendedName>
        <fullName evidence="1">ATP synthase epsilon chain</fullName>
    </recommendedName>
    <alternativeName>
        <fullName evidence="1">ATP synthase F1 sector epsilon subunit</fullName>
    </alternativeName>
    <alternativeName>
        <fullName evidence="1">F-ATPase epsilon subunit</fullName>
    </alternativeName>
</protein>
<reference key="1">
    <citation type="journal article" date="2011" name="J. Bacteriol.">
        <title>Comparative genomics of 28 Salmonella enterica isolates: evidence for CRISPR-mediated adaptive sublineage evolution.</title>
        <authorList>
            <person name="Fricke W.F."/>
            <person name="Mammel M.K."/>
            <person name="McDermott P.F."/>
            <person name="Tartera C."/>
            <person name="White D.G."/>
            <person name="Leclerc J.E."/>
            <person name="Ravel J."/>
            <person name="Cebula T.A."/>
        </authorList>
    </citation>
    <scope>NUCLEOTIDE SEQUENCE [LARGE SCALE GENOMIC DNA]</scope>
    <source>
        <strain>SL483</strain>
    </source>
</reference>
<proteinExistence type="inferred from homology"/>
<accession>B5EYZ5</accession>
<feature type="chain" id="PRO_1000127885" description="ATP synthase epsilon chain">
    <location>
        <begin position="1"/>
        <end position="139"/>
    </location>
</feature>
<sequence length="139" mass="15064">MAMTYHLDVVSAEQQMFSGLVEKIQVTGSEGELGIYPGHAPLLTAIKPGMIRIVKQHGHEEFIYLSGGILEVQPGSVTVLADTAIRGQDLDEARALEAKRKAEEHIKSSHGDVDYAQASAELAKAIAKLRVIELTKKAM</sequence>
<name>ATPE_SALA4</name>
<evidence type="ECO:0000255" key="1">
    <source>
        <dbReference type="HAMAP-Rule" id="MF_00530"/>
    </source>
</evidence>
<organism>
    <name type="scientific">Salmonella agona (strain SL483)</name>
    <dbReference type="NCBI Taxonomy" id="454166"/>
    <lineage>
        <taxon>Bacteria</taxon>
        <taxon>Pseudomonadati</taxon>
        <taxon>Pseudomonadota</taxon>
        <taxon>Gammaproteobacteria</taxon>
        <taxon>Enterobacterales</taxon>
        <taxon>Enterobacteriaceae</taxon>
        <taxon>Salmonella</taxon>
    </lineage>
</organism>
<keyword id="KW-0066">ATP synthesis</keyword>
<keyword id="KW-0997">Cell inner membrane</keyword>
<keyword id="KW-1003">Cell membrane</keyword>
<keyword id="KW-0139">CF(1)</keyword>
<keyword id="KW-0375">Hydrogen ion transport</keyword>
<keyword id="KW-0406">Ion transport</keyword>
<keyword id="KW-0472">Membrane</keyword>
<keyword id="KW-0813">Transport</keyword>
<gene>
    <name evidence="1" type="primary">atpC</name>
    <name type="ordered locus">SeAg_B4089</name>
</gene>